<feature type="chain" id="PRO_1000126160" description="L-lactate dehydrogenase">
    <location>
        <begin position="1"/>
        <end position="328"/>
    </location>
</feature>
<feature type="active site" description="Proton acceptor" evidence="1">
    <location>
        <position position="181"/>
    </location>
</feature>
<feature type="binding site" evidence="1">
    <location>
        <position position="18"/>
    </location>
    <ligand>
        <name>NAD(+)</name>
        <dbReference type="ChEBI" id="CHEBI:57540"/>
    </ligand>
</feature>
<feature type="binding site" evidence="1">
    <location>
        <position position="39"/>
    </location>
    <ligand>
        <name>NAD(+)</name>
        <dbReference type="ChEBI" id="CHEBI:57540"/>
    </ligand>
</feature>
<feature type="binding site" evidence="1">
    <location>
        <position position="46"/>
    </location>
    <ligand>
        <name>NAD(+)</name>
        <dbReference type="ChEBI" id="CHEBI:57540"/>
    </ligand>
</feature>
<feature type="binding site" evidence="1">
    <location>
        <position position="71"/>
    </location>
    <ligand>
        <name>NAD(+)</name>
        <dbReference type="ChEBI" id="CHEBI:57540"/>
    </ligand>
</feature>
<feature type="binding site" evidence="1">
    <location>
        <begin position="85"/>
        <end position="86"/>
    </location>
    <ligand>
        <name>NAD(+)</name>
        <dbReference type="ChEBI" id="CHEBI:57540"/>
    </ligand>
</feature>
<feature type="binding site" evidence="1">
    <location>
        <position position="88"/>
    </location>
    <ligand>
        <name>substrate</name>
    </ligand>
</feature>
<feature type="binding site" evidence="1">
    <location>
        <position position="94"/>
    </location>
    <ligand>
        <name>substrate</name>
    </ligand>
</feature>
<feature type="binding site" evidence="1">
    <location>
        <position position="107"/>
    </location>
    <ligand>
        <name>NAD(+)</name>
        <dbReference type="ChEBI" id="CHEBI:57540"/>
    </ligand>
</feature>
<feature type="binding site" evidence="1">
    <location>
        <begin position="124"/>
        <end position="126"/>
    </location>
    <ligand>
        <name>NAD(+)</name>
        <dbReference type="ChEBI" id="CHEBI:57540"/>
    </ligand>
</feature>
<feature type="binding site" evidence="1">
    <location>
        <begin position="126"/>
        <end position="129"/>
    </location>
    <ligand>
        <name>substrate</name>
    </ligand>
</feature>
<feature type="binding site" evidence="1">
    <location>
        <position position="149"/>
    </location>
    <ligand>
        <name>NAD(+)</name>
        <dbReference type="ChEBI" id="CHEBI:57540"/>
    </ligand>
</feature>
<feature type="binding site" evidence="1">
    <location>
        <begin position="154"/>
        <end position="157"/>
    </location>
    <ligand>
        <name>substrate</name>
    </ligand>
</feature>
<feature type="binding site" evidence="1">
    <location>
        <position position="159"/>
    </location>
    <ligand>
        <name>beta-D-fructose 1,6-bisphosphate</name>
        <dbReference type="ChEBI" id="CHEBI:32966"/>
        <note>allosteric activator</note>
    </ligand>
</feature>
<feature type="binding site" evidence="1">
    <location>
        <position position="174"/>
    </location>
    <ligand>
        <name>beta-D-fructose 1,6-bisphosphate</name>
        <dbReference type="ChEBI" id="CHEBI:32966"/>
        <note>allosteric activator</note>
    </ligand>
</feature>
<feature type="binding site" evidence="1">
    <location>
        <position position="235"/>
    </location>
    <ligand>
        <name>substrate</name>
    </ligand>
</feature>
<feature type="modified residue" description="Phosphotyrosine" evidence="1">
    <location>
        <position position="226"/>
    </location>
</feature>
<accession>B1IC17</accession>
<organism>
    <name type="scientific">Streptococcus pneumoniae (strain Hungary19A-6)</name>
    <dbReference type="NCBI Taxonomy" id="487214"/>
    <lineage>
        <taxon>Bacteria</taxon>
        <taxon>Bacillati</taxon>
        <taxon>Bacillota</taxon>
        <taxon>Bacilli</taxon>
        <taxon>Lactobacillales</taxon>
        <taxon>Streptococcaceae</taxon>
        <taxon>Streptococcus</taxon>
    </lineage>
</organism>
<name>LDH_STRPI</name>
<reference key="1">
    <citation type="journal article" date="2010" name="Genome Biol.">
        <title>Structure and dynamics of the pan-genome of Streptococcus pneumoniae and closely related species.</title>
        <authorList>
            <person name="Donati C."/>
            <person name="Hiller N.L."/>
            <person name="Tettelin H."/>
            <person name="Muzzi A."/>
            <person name="Croucher N.J."/>
            <person name="Angiuoli S.V."/>
            <person name="Oggioni M."/>
            <person name="Dunning Hotopp J.C."/>
            <person name="Hu F.Z."/>
            <person name="Riley D.R."/>
            <person name="Covacci A."/>
            <person name="Mitchell T.J."/>
            <person name="Bentley S.D."/>
            <person name="Kilian M."/>
            <person name="Ehrlich G.D."/>
            <person name="Rappuoli R."/>
            <person name="Moxon E.R."/>
            <person name="Masignani V."/>
        </authorList>
    </citation>
    <scope>NUCLEOTIDE SEQUENCE [LARGE SCALE GENOMIC DNA]</scope>
    <source>
        <strain>Hungary19A-6</strain>
    </source>
</reference>
<proteinExistence type="inferred from homology"/>
<dbReference type="EC" id="1.1.1.27" evidence="1"/>
<dbReference type="EMBL" id="CP000936">
    <property type="protein sequence ID" value="ACA37368.1"/>
    <property type="molecule type" value="Genomic_DNA"/>
</dbReference>
<dbReference type="RefSeq" id="WP_000204727.1">
    <property type="nucleotide sequence ID" value="NC_010380.1"/>
</dbReference>
<dbReference type="SMR" id="B1IC17"/>
<dbReference type="KEGG" id="spv:SPH_1335"/>
<dbReference type="HOGENOM" id="CLU_045401_1_1_9"/>
<dbReference type="UniPathway" id="UPA00554">
    <property type="reaction ID" value="UER00611"/>
</dbReference>
<dbReference type="Proteomes" id="UP000002163">
    <property type="component" value="Chromosome"/>
</dbReference>
<dbReference type="GO" id="GO:0005737">
    <property type="term" value="C:cytoplasm"/>
    <property type="evidence" value="ECO:0007669"/>
    <property type="project" value="UniProtKB-SubCell"/>
</dbReference>
<dbReference type="GO" id="GO:0004459">
    <property type="term" value="F:L-lactate dehydrogenase activity"/>
    <property type="evidence" value="ECO:0007669"/>
    <property type="project" value="UniProtKB-UniRule"/>
</dbReference>
<dbReference type="GO" id="GO:0006096">
    <property type="term" value="P:glycolytic process"/>
    <property type="evidence" value="ECO:0007669"/>
    <property type="project" value="UniProtKB-UniRule"/>
</dbReference>
<dbReference type="GO" id="GO:0006089">
    <property type="term" value="P:lactate metabolic process"/>
    <property type="evidence" value="ECO:0007669"/>
    <property type="project" value="TreeGrafter"/>
</dbReference>
<dbReference type="CDD" id="cd05291">
    <property type="entry name" value="HicDH_like"/>
    <property type="match status" value="1"/>
</dbReference>
<dbReference type="FunFam" id="3.40.50.720:FF:000018">
    <property type="entry name" value="Malate dehydrogenase"/>
    <property type="match status" value="1"/>
</dbReference>
<dbReference type="Gene3D" id="3.90.110.10">
    <property type="entry name" value="Lactate dehydrogenase/glycoside hydrolase, family 4, C-terminal"/>
    <property type="match status" value="1"/>
</dbReference>
<dbReference type="Gene3D" id="3.40.50.720">
    <property type="entry name" value="NAD(P)-binding Rossmann-like Domain"/>
    <property type="match status" value="1"/>
</dbReference>
<dbReference type="HAMAP" id="MF_00488">
    <property type="entry name" value="Lactate_dehydrog"/>
    <property type="match status" value="1"/>
</dbReference>
<dbReference type="InterPro" id="IPR001557">
    <property type="entry name" value="L-lactate/malate_DH"/>
</dbReference>
<dbReference type="InterPro" id="IPR011304">
    <property type="entry name" value="L-lactate_DH"/>
</dbReference>
<dbReference type="InterPro" id="IPR018177">
    <property type="entry name" value="L-lactate_DH_AS"/>
</dbReference>
<dbReference type="InterPro" id="IPR022383">
    <property type="entry name" value="Lactate/malate_DH_C"/>
</dbReference>
<dbReference type="InterPro" id="IPR001236">
    <property type="entry name" value="Lactate/malate_DH_N"/>
</dbReference>
<dbReference type="InterPro" id="IPR015955">
    <property type="entry name" value="Lactate_DH/Glyco_Ohase_4_C"/>
</dbReference>
<dbReference type="InterPro" id="IPR036291">
    <property type="entry name" value="NAD(P)-bd_dom_sf"/>
</dbReference>
<dbReference type="NCBIfam" id="TIGR01771">
    <property type="entry name" value="L-LDH-NAD"/>
    <property type="match status" value="1"/>
</dbReference>
<dbReference type="NCBIfam" id="NF000824">
    <property type="entry name" value="PRK00066.1"/>
    <property type="match status" value="1"/>
</dbReference>
<dbReference type="PANTHER" id="PTHR43128">
    <property type="entry name" value="L-2-HYDROXYCARBOXYLATE DEHYDROGENASE (NAD(P)(+))"/>
    <property type="match status" value="1"/>
</dbReference>
<dbReference type="PANTHER" id="PTHR43128:SF16">
    <property type="entry name" value="L-LACTATE DEHYDROGENASE"/>
    <property type="match status" value="1"/>
</dbReference>
<dbReference type="Pfam" id="PF02866">
    <property type="entry name" value="Ldh_1_C"/>
    <property type="match status" value="1"/>
</dbReference>
<dbReference type="Pfam" id="PF00056">
    <property type="entry name" value="Ldh_1_N"/>
    <property type="match status" value="1"/>
</dbReference>
<dbReference type="PIRSF" id="PIRSF000102">
    <property type="entry name" value="Lac_mal_DH"/>
    <property type="match status" value="1"/>
</dbReference>
<dbReference type="PRINTS" id="PR00086">
    <property type="entry name" value="LLDHDRGNASE"/>
</dbReference>
<dbReference type="SUPFAM" id="SSF56327">
    <property type="entry name" value="LDH C-terminal domain-like"/>
    <property type="match status" value="1"/>
</dbReference>
<dbReference type="SUPFAM" id="SSF51735">
    <property type="entry name" value="NAD(P)-binding Rossmann-fold domains"/>
    <property type="match status" value="1"/>
</dbReference>
<dbReference type="PROSITE" id="PS00064">
    <property type="entry name" value="L_LDH"/>
    <property type="match status" value="1"/>
</dbReference>
<protein>
    <recommendedName>
        <fullName evidence="1">L-lactate dehydrogenase</fullName>
        <shortName evidence="1">L-LDH</shortName>
        <ecNumber evidence="1">1.1.1.27</ecNumber>
    </recommendedName>
</protein>
<gene>
    <name evidence="1" type="primary">ldh</name>
    <name type="ordered locus">SPH_1335</name>
</gene>
<comment type="function">
    <text evidence="1">Catalyzes the conversion of lactate to pyruvate.</text>
</comment>
<comment type="catalytic activity">
    <reaction evidence="1">
        <text>(S)-lactate + NAD(+) = pyruvate + NADH + H(+)</text>
        <dbReference type="Rhea" id="RHEA:23444"/>
        <dbReference type="ChEBI" id="CHEBI:15361"/>
        <dbReference type="ChEBI" id="CHEBI:15378"/>
        <dbReference type="ChEBI" id="CHEBI:16651"/>
        <dbReference type="ChEBI" id="CHEBI:57540"/>
        <dbReference type="ChEBI" id="CHEBI:57945"/>
        <dbReference type="EC" id="1.1.1.27"/>
    </reaction>
</comment>
<comment type="activity regulation">
    <text evidence="1">Allosterically activated by fructose 1,6-bisphosphate (FBP).</text>
</comment>
<comment type="pathway">
    <text evidence="1">Fermentation; pyruvate fermentation to lactate; (S)-lactate from pyruvate: step 1/1.</text>
</comment>
<comment type="subunit">
    <text evidence="1">Homotetramer.</text>
</comment>
<comment type="subcellular location">
    <subcellularLocation>
        <location evidence="1">Cytoplasm</location>
    </subcellularLocation>
</comment>
<comment type="similarity">
    <text evidence="1">Belongs to the LDH/MDH superfamily. LDH family.</text>
</comment>
<sequence length="328" mass="35355">MTSTKQHKKVILVGDGAVGSSYAFALVNQGIAQELGIIEIPQLHEKAVGDALDLSHALAFTSPKKIYAAQYSDCADADLVVITAGAPQKPGETRLDLVGKNLAINKSIVTQVVESGFKGIFLVAANPVDVLTYSTWKFSGFPKERVIGSGTSLDSARFRQALAEKLDVDARSVHAYIMGEHGDSEFAVWSHANIAGVNLEEFLKDTQNVQEAELIELFEGVRDAAYTIINKKGATYYGIAVALARITKAILDDENAVLPLSVFQEGQYGVENVFIGQPAVVGAHGIVRPVNIPLNDAETQKMQASAKELQAIIDEAWKNPEFQEASKN</sequence>
<evidence type="ECO:0000255" key="1">
    <source>
        <dbReference type="HAMAP-Rule" id="MF_00488"/>
    </source>
</evidence>
<keyword id="KW-0021">Allosteric enzyme</keyword>
<keyword id="KW-0963">Cytoplasm</keyword>
<keyword id="KW-0520">NAD</keyword>
<keyword id="KW-0560">Oxidoreductase</keyword>
<keyword id="KW-0597">Phosphoprotein</keyword>